<reference key="1">
    <citation type="journal article" date="2008" name="J. Cereal Sci.">
        <title>Cloning, expression and characterization of novel avenin-like genes in wheat and related species.</title>
        <authorList>
            <person name="Chen P."/>
            <person name="Wang C."/>
            <person name="Li K."/>
            <person name="Chang J."/>
            <person name="Wang Y."/>
            <person name="Yang G."/>
            <person name="Shewry P.R."/>
            <person name="He G."/>
        </authorList>
    </citation>
    <scope>NUCLEOTIDE SEQUENCE [GENOMIC DNA]</scope>
    <scope>DEVELOPMENTAL STAGE</scope>
    <scope>TISSUE SPECIFICITY</scope>
    <source>
        <strain>cv. En1</strain>
    </source>
</reference>
<evidence type="ECO:0000250" key="1"/>
<evidence type="ECO:0000255" key="2"/>
<evidence type="ECO:0000269" key="3">
    <source ref="1"/>
</evidence>
<evidence type="ECO:0000305" key="4"/>
<protein>
    <recommendedName>
        <fullName>Avenin-like b5</fullName>
    </recommendedName>
</protein>
<keyword id="KW-1015">Disulfide bond</keyword>
<keyword id="KW-1185">Reference proteome</keyword>
<keyword id="KW-0708">Seed storage protein</keyword>
<keyword id="KW-0732">Signal</keyword>
<keyword id="KW-0758">Storage protein</keyword>
<comment type="function">
    <text evidence="1">Seed storage protein. Might be integrated via inter-chain disulfide bonds within the glutenin polymer (By similarity).</text>
</comment>
<comment type="tissue specificity">
    <text evidence="3">Expressed only in developing endosperms. Not detected in roots, stems or leaves.</text>
</comment>
<comment type="developmental stage">
    <text evidence="3">Expressed between 3 and 22 days post anthesis (DPA), with a peak between 11 and 15 DPA.</text>
</comment>
<comment type="PTM">
    <text evidence="4">Contains disulfide bonds.</text>
</comment>
<comment type="similarity">
    <text evidence="4">Belongs to the prolamin family.</text>
</comment>
<organism>
    <name type="scientific">Triticum aestivum</name>
    <name type="common">Wheat</name>
    <dbReference type="NCBI Taxonomy" id="4565"/>
    <lineage>
        <taxon>Eukaryota</taxon>
        <taxon>Viridiplantae</taxon>
        <taxon>Streptophyta</taxon>
        <taxon>Embryophyta</taxon>
        <taxon>Tracheophyta</taxon>
        <taxon>Spermatophyta</taxon>
        <taxon>Magnoliopsida</taxon>
        <taxon>Liliopsida</taxon>
        <taxon>Poales</taxon>
        <taxon>Poaceae</taxon>
        <taxon>BOP clade</taxon>
        <taxon>Pooideae</taxon>
        <taxon>Triticodae</taxon>
        <taxon>Triticeae</taxon>
        <taxon>Triticinae</taxon>
        <taxon>Triticum</taxon>
    </lineage>
</organism>
<name>AVLB5_WHEAT</name>
<dbReference type="EMBL" id="JN622144">
    <property type="protein sequence ID" value="ABU89794.1"/>
    <property type="molecule type" value="Genomic_DNA"/>
</dbReference>
<dbReference type="Proteomes" id="UP000019116">
    <property type="component" value="Unplaced"/>
</dbReference>
<dbReference type="ExpressionAtlas" id="A7XUQ5">
    <property type="expression patterns" value="baseline and differential"/>
</dbReference>
<dbReference type="GO" id="GO:0045735">
    <property type="term" value="F:nutrient reservoir activity"/>
    <property type="evidence" value="ECO:0007669"/>
    <property type="project" value="UniProtKB-KW"/>
</dbReference>
<dbReference type="CDD" id="cd00261">
    <property type="entry name" value="AAI_SS"/>
    <property type="match status" value="2"/>
</dbReference>
<dbReference type="Gene3D" id="1.10.110.10">
    <property type="entry name" value="Plant lipid-transfer and hydrophobic proteins"/>
    <property type="match status" value="2"/>
</dbReference>
<dbReference type="InterPro" id="IPR036312">
    <property type="entry name" value="Bifun_inhib/LTP/seed_sf"/>
</dbReference>
<dbReference type="InterPro" id="IPR016140">
    <property type="entry name" value="Bifunc_inhib/LTP/seed_store"/>
</dbReference>
<dbReference type="InterPro" id="IPR001954">
    <property type="entry name" value="Glia_glutenin"/>
</dbReference>
<dbReference type="PANTHER" id="PTHR33454:SF11">
    <property type="entry name" value="AVENIN-LIKE B5"/>
    <property type="match status" value="1"/>
</dbReference>
<dbReference type="PANTHER" id="PTHR33454">
    <property type="entry name" value="PROLAMIN PPROL 14P"/>
    <property type="match status" value="1"/>
</dbReference>
<dbReference type="Pfam" id="PF13016">
    <property type="entry name" value="Gliadin"/>
    <property type="match status" value="2"/>
</dbReference>
<dbReference type="PRINTS" id="PR00208">
    <property type="entry name" value="GLIADGLUTEN"/>
</dbReference>
<dbReference type="PRINTS" id="PR00209">
    <property type="entry name" value="GLIADIN"/>
</dbReference>
<dbReference type="SMART" id="SM00499">
    <property type="entry name" value="AAI"/>
    <property type="match status" value="2"/>
</dbReference>
<dbReference type="SUPFAM" id="SSF47699">
    <property type="entry name" value="Bifunctional inhibitor/lipid-transfer protein/seed storage 2S albumin"/>
    <property type="match status" value="2"/>
</dbReference>
<accession>A7XUQ5</accession>
<proteinExistence type="evidence at transcript level"/>
<feature type="signal peptide" evidence="2">
    <location>
        <begin position="1"/>
        <end position="18"/>
    </location>
</feature>
<feature type="chain" id="PRO_0000410686" description="Avenin-like b5">
    <location>
        <begin position="19"/>
        <end position="284"/>
    </location>
</feature>
<sequence length="284" mass="32759">MKVFILALLALTATTAIAQLETTCSQGFRQYQQQQQPGQRQLLEQMRPCVAFLQQQCRPLRMPFLQTQVEQLSSCQIVQYQCCQQLAQIPEQIRCHAIHNVVEAIMQQQSQQQRQERQQQAQHKSMRMLLETLYLMCNIYVPIQCQQQQQLGQQQQQQLQEQLTPCATFLQHQCSPVTVPFPQIPVDQPTSCQNVQHQCCRQLSQIPEQFRCQAIHNVAEAIRQQQPQQQWQGMYQPQQPAQLESIRMSLQALRSMCSIYIPVQCPAPTAYNIPMVATYTGGAC</sequence>